<gene>
    <name evidence="8" type="primary">eef2.1.L</name>
</gene>
<reference key="1">
    <citation type="journal article" date="2016" name="Nature">
        <title>Genome evolution in the allotetraploid frog Xenopus laevis.</title>
        <authorList>
            <person name="Session A.M."/>
            <person name="Uno Y."/>
            <person name="Kwon T."/>
            <person name="Chapman J.A."/>
            <person name="Toyoda A."/>
            <person name="Takahashi S."/>
            <person name="Fukui A."/>
            <person name="Hikosaka A."/>
            <person name="Suzuki A."/>
            <person name="Kondo M."/>
            <person name="van Heeringen S.J."/>
            <person name="Quigley I."/>
            <person name="Heinz S."/>
            <person name="Ogino H."/>
            <person name="Ochi H."/>
            <person name="Hellsten U."/>
            <person name="Lyons J.B."/>
            <person name="Simakov O."/>
            <person name="Putnam N."/>
            <person name="Stites J."/>
            <person name="Kuroki Y."/>
            <person name="Tanaka T."/>
            <person name="Michiue T."/>
            <person name="Watanabe M."/>
            <person name="Bogdanovic O."/>
            <person name="Lister R."/>
            <person name="Georgiou G."/>
            <person name="Paranjpe S.S."/>
            <person name="van Kruijsbergen I."/>
            <person name="Shu S."/>
            <person name="Carlson J."/>
            <person name="Kinoshita T."/>
            <person name="Ohta Y."/>
            <person name="Mawaribuchi S."/>
            <person name="Jenkins J."/>
            <person name="Grimwood J."/>
            <person name="Schmutz J."/>
            <person name="Mitros T."/>
            <person name="Mozaffari S.V."/>
            <person name="Suzuki Y."/>
            <person name="Haramoto Y."/>
            <person name="Yamamoto T.S."/>
            <person name="Takagi C."/>
            <person name="Heald R."/>
            <person name="Miller K."/>
            <person name="Haudenschild C."/>
            <person name="Kitzman J."/>
            <person name="Nakayama T."/>
            <person name="Izutsu Y."/>
            <person name="Robert J."/>
            <person name="Fortriede J."/>
            <person name="Burns K."/>
            <person name="Lotay V."/>
            <person name="Karimi K."/>
            <person name="Yasuoka Y."/>
            <person name="Dichmann D.S."/>
            <person name="Flajnik M.F."/>
            <person name="Houston D.W."/>
            <person name="Shendure J."/>
            <person name="DuPasquier L."/>
            <person name="Vize P.D."/>
            <person name="Zorn A.M."/>
            <person name="Ito M."/>
            <person name="Marcotte E.M."/>
            <person name="Wallingford J.B."/>
            <person name="Ito Y."/>
            <person name="Asashima M."/>
            <person name="Ueno N."/>
            <person name="Matsuda Y."/>
            <person name="Veenstra G.J."/>
            <person name="Fujiyama A."/>
            <person name="Harland R.M."/>
            <person name="Taira M."/>
            <person name="Rokhsar D.S."/>
        </authorList>
    </citation>
    <scope>NUCLEOTIDE SEQUENCE [LARGE SCALE GENOMIC DNA]</scope>
    <source>
        <strain>J</strain>
    </source>
</reference>
<reference evidence="7" key="2">
    <citation type="submission" date="2003-01" db="EMBL/GenBank/DDBJ databases">
        <authorList>
            <consortium name="NIH - Xenopus Gene Collection (XGC) project"/>
        </authorList>
    </citation>
    <scope>NUCLEOTIDE SEQUENCE [LARGE SCALE MRNA]</scope>
    <source>
        <tissue>Embryo</tissue>
    </source>
</reference>
<reference evidence="9" key="3">
    <citation type="journal article" date="2023" name="Nature">
        <title>A molecular network of conserved factors keeps ribosomes dormant in the egg.</title>
        <authorList>
            <person name="Leesch F."/>
            <person name="Lorenzo-Orts L."/>
            <person name="Pribitzer C."/>
            <person name="Grishkovskaya I."/>
            <person name="Roehsner J."/>
            <person name="Chugunova A."/>
            <person name="Matzinger M."/>
            <person name="Roitinger E."/>
            <person name="Belacic K."/>
            <person name="Kandolf S."/>
            <person name="Lin T.Y."/>
            <person name="Mechtler K."/>
            <person name="Meinhart A."/>
            <person name="Haselbach D."/>
            <person name="Pauli A."/>
        </authorList>
    </citation>
    <scope>STRUCTURE BY ELECTRON MICROSCOPY (2.40 ANGSTROMS) IN COMPLEX WITH RIBOSOME AND HABP4</scope>
    <scope>INTERACTION WITH HABP4</scope>
</reference>
<comment type="function">
    <text evidence="2">Catalyzes the GTP-dependent ribosomal translocation step during translation elongation (By similarity). During this step, the ribosome changes from the pre-translocational (PRE) to the post-translocational (POST) state as the newly formed A-site-bound peptidyl-tRNA and P-site-bound deacylated tRNA move to the P and E sites, respectively (By similarity). Catalyzes the coordinated movement of the two tRNA molecules, the mRNA and conformational changes in the ribosome (By similarity).</text>
</comment>
<comment type="catalytic activity">
    <reaction evidence="2">
        <text>GTP + H2O = GDP + phosphate + H(+)</text>
        <dbReference type="Rhea" id="RHEA:19669"/>
        <dbReference type="ChEBI" id="CHEBI:15377"/>
        <dbReference type="ChEBI" id="CHEBI:15378"/>
        <dbReference type="ChEBI" id="CHEBI:37565"/>
        <dbReference type="ChEBI" id="CHEBI:43474"/>
        <dbReference type="ChEBI" id="CHEBI:58189"/>
    </reaction>
    <physiologicalReaction direction="left-to-right" evidence="2">
        <dbReference type="Rhea" id="RHEA:19670"/>
    </physiologicalReaction>
</comment>
<comment type="subunit">
    <text evidence="2 6">Binds to 80S ribosomes (PubMed:36653451). Actively translating ribosomes show mutually exclusive binding of eIF5a (EIF5A or EIF5A2) and EEF2/eEF2 (By similarity). Interacts with serbp1; interaction sequesters eef2/eEF2 at the A-site of the ribosome, thereby blocking the interaction sites of the mRNA-tRNA complex, promoting ribosome stabilization and hibernation (By similarity). Interacts with habp4; interaction takes place at the A-site of hibernating ribosomes and promotes ribosome stabilization (PubMed:36653451).</text>
</comment>
<comment type="subcellular location">
    <subcellularLocation>
        <location evidence="2">Cytoplasm</location>
    </subcellularLocation>
    <subcellularLocation>
        <location evidence="2">Nucleus</location>
    </subcellularLocation>
</comment>
<comment type="similarity">
    <text evidence="5">Belongs to the TRAFAC class translation factor GTPase superfamily. Classic translation factor GTPase family. EF-G/EF-2 subfamily.</text>
</comment>
<feature type="initiator methionine" description="Removed" evidence="4">
    <location>
        <position position="1"/>
    </location>
</feature>
<feature type="chain" id="PRO_0000458238" description="Elongation factor 2">
    <location>
        <begin position="2"/>
        <end position="858"/>
    </location>
</feature>
<feature type="domain" description="tr-type G" evidence="5">
    <location>
        <begin position="17"/>
        <end position="362"/>
    </location>
</feature>
<feature type="binding site" evidence="3">
    <location>
        <begin position="26"/>
        <end position="33"/>
    </location>
    <ligand>
        <name>GTP</name>
        <dbReference type="ChEBI" id="CHEBI:37565"/>
    </ligand>
</feature>
<feature type="binding site" evidence="3">
    <location>
        <begin position="158"/>
        <end position="161"/>
    </location>
    <ligand>
        <name>GTP</name>
        <dbReference type="ChEBI" id="CHEBI:37565"/>
    </ligand>
</feature>
<feature type="binding site" evidence="3">
    <location>
        <begin position="216"/>
        <end position="218"/>
    </location>
    <ligand>
        <name>GTP</name>
        <dbReference type="ChEBI" id="CHEBI:37565"/>
    </ligand>
</feature>
<feature type="modified residue" description="Diphthamide" evidence="1">
    <location>
        <position position="715"/>
    </location>
</feature>
<organism>
    <name type="scientific">Xenopus laevis</name>
    <name type="common">African clawed frog</name>
    <dbReference type="NCBI Taxonomy" id="8355"/>
    <lineage>
        <taxon>Eukaryota</taxon>
        <taxon>Metazoa</taxon>
        <taxon>Chordata</taxon>
        <taxon>Craniata</taxon>
        <taxon>Vertebrata</taxon>
        <taxon>Euteleostomi</taxon>
        <taxon>Amphibia</taxon>
        <taxon>Batrachia</taxon>
        <taxon>Anura</taxon>
        <taxon>Pipoidea</taxon>
        <taxon>Pipidae</taxon>
        <taxon>Xenopodinae</taxon>
        <taxon>Xenopus</taxon>
        <taxon>Xenopus</taxon>
    </lineage>
</organism>
<evidence type="ECO:0000250" key="1">
    <source>
        <dbReference type="UniProtKB" id="P05197"/>
    </source>
</evidence>
<evidence type="ECO:0000250" key="2">
    <source>
        <dbReference type="UniProtKB" id="P13639"/>
    </source>
</evidence>
<evidence type="ECO:0000250" key="3">
    <source>
        <dbReference type="UniProtKB" id="P32324"/>
    </source>
</evidence>
<evidence type="ECO:0000250" key="4">
    <source>
        <dbReference type="UniProtKB" id="Q90705"/>
    </source>
</evidence>
<evidence type="ECO:0000255" key="5">
    <source>
        <dbReference type="PROSITE-ProRule" id="PRU01059"/>
    </source>
</evidence>
<evidence type="ECO:0000269" key="6">
    <source>
    </source>
</evidence>
<evidence type="ECO:0000312" key="7">
    <source>
        <dbReference type="EMBL" id="AAH44327.1"/>
    </source>
</evidence>
<evidence type="ECO:0000312" key="8">
    <source>
        <dbReference type="Xenbase" id="XB-GENE-969746"/>
    </source>
</evidence>
<evidence type="ECO:0007744" key="9">
    <source>
        <dbReference type="PDB" id="7OYC"/>
    </source>
</evidence>
<protein>
    <recommendedName>
        <fullName>Elongation factor 2</fullName>
        <shortName>EF-2</shortName>
        <ecNumber evidence="2">3.6.5.-</ecNumber>
    </recommendedName>
</protein>
<dbReference type="EC" id="3.6.5.-" evidence="2"/>
<dbReference type="EMBL" id="CM004466">
    <property type="status" value="NOT_ANNOTATED_CDS"/>
    <property type="molecule type" value="Genomic_DNA"/>
</dbReference>
<dbReference type="EMBL" id="BC044327">
    <property type="protein sequence ID" value="AAH44327.1"/>
    <property type="molecule type" value="mRNA"/>
</dbReference>
<dbReference type="RefSeq" id="NP_001080656.1">
    <property type="nucleotide sequence ID" value="NM_001087187.1"/>
</dbReference>
<dbReference type="PDB" id="7OYC">
    <property type="method" value="EM"/>
    <property type="resolution" value="2.40 A"/>
    <property type="chains" value="v2=1-858"/>
</dbReference>
<dbReference type="PDBsum" id="7OYC"/>
<dbReference type="EMDB" id="EMD-13113"/>
<dbReference type="SMR" id="Q7ZXP8"/>
<dbReference type="IntAct" id="Q7ZXP8">
    <property type="interactions" value="1"/>
</dbReference>
<dbReference type="STRING" id="8355.Q7ZXP8"/>
<dbReference type="PaxDb" id="8355-Q7ZXP8"/>
<dbReference type="DNASU" id="380348"/>
<dbReference type="GeneID" id="380348"/>
<dbReference type="KEGG" id="xla:380348"/>
<dbReference type="AGR" id="Xenbase:XB-GENE-969746"/>
<dbReference type="CTD" id="380348"/>
<dbReference type="Xenbase" id="XB-GENE-969746">
    <property type="gene designation" value="eef2.L"/>
</dbReference>
<dbReference type="OMA" id="GENQCET"/>
<dbReference type="OrthoDB" id="364892at2759"/>
<dbReference type="Proteomes" id="UP000186698">
    <property type="component" value="Chromosome 1L"/>
</dbReference>
<dbReference type="Proteomes" id="UP000694892">
    <property type="component" value="Chromosome 1L"/>
</dbReference>
<dbReference type="Bgee" id="380348">
    <property type="expression patterns" value="Expressed in intestine and 19 other cell types or tissues"/>
</dbReference>
<dbReference type="GO" id="GO:0005829">
    <property type="term" value="C:cytosol"/>
    <property type="evidence" value="ECO:0000318"/>
    <property type="project" value="GO_Central"/>
</dbReference>
<dbReference type="GO" id="GO:0005634">
    <property type="term" value="C:nucleus"/>
    <property type="evidence" value="ECO:0007669"/>
    <property type="project" value="UniProtKB-SubCell"/>
</dbReference>
<dbReference type="GO" id="GO:1990904">
    <property type="term" value="C:ribonucleoprotein complex"/>
    <property type="evidence" value="ECO:0000318"/>
    <property type="project" value="GO_Central"/>
</dbReference>
<dbReference type="GO" id="GO:0005525">
    <property type="term" value="F:GTP binding"/>
    <property type="evidence" value="ECO:0007669"/>
    <property type="project" value="UniProtKB-KW"/>
</dbReference>
<dbReference type="GO" id="GO:0003924">
    <property type="term" value="F:GTPase activity"/>
    <property type="evidence" value="ECO:0000318"/>
    <property type="project" value="GO_Central"/>
</dbReference>
<dbReference type="GO" id="GO:0043022">
    <property type="term" value="F:ribosome binding"/>
    <property type="evidence" value="ECO:0000318"/>
    <property type="project" value="GO_Central"/>
</dbReference>
<dbReference type="GO" id="GO:0003746">
    <property type="term" value="F:translation elongation factor activity"/>
    <property type="evidence" value="ECO:0000318"/>
    <property type="project" value="GO_Central"/>
</dbReference>
<dbReference type="GO" id="GO:0006414">
    <property type="term" value="P:translational elongation"/>
    <property type="evidence" value="ECO:0000318"/>
    <property type="project" value="GO_Central"/>
</dbReference>
<dbReference type="CDD" id="cd01681">
    <property type="entry name" value="aeEF2_snRNP_like_IV"/>
    <property type="match status" value="1"/>
</dbReference>
<dbReference type="CDD" id="cd04096">
    <property type="entry name" value="eEF2_snRNP_like_C"/>
    <property type="match status" value="1"/>
</dbReference>
<dbReference type="CDD" id="cd01885">
    <property type="entry name" value="EF2"/>
    <property type="match status" value="1"/>
</dbReference>
<dbReference type="CDD" id="cd16261">
    <property type="entry name" value="EF2_snRNP_III"/>
    <property type="match status" value="1"/>
</dbReference>
<dbReference type="CDD" id="cd03700">
    <property type="entry name" value="EF2_snRNP_like_II"/>
    <property type="match status" value="1"/>
</dbReference>
<dbReference type="FunFam" id="3.90.1430.10:FF:000003">
    <property type="entry name" value="Elongation factor 2"/>
    <property type="match status" value="1"/>
</dbReference>
<dbReference type="FunFam" id="2.40.30.10:FF:000010">
    <property type="entry name" value="Translation elongation factor 2"/>
    <property type="match status" value="1"/>
</dbReference>
<dbReference type="FunFam" id="3.30.230.10:FF:000006">
    <property type="entry name" value="Translation elongation factor 2"/>
    <property type="match status" value="1"/>
</dbReference>
<dbReference type="FunFam" id="3.30.70.240:FF:000003">
    <property type="entry name" value="Translation elongation factor 2"/>
    <property type="match status" value="1"/>
</dbReference>
<dbReference type="FunFam" id="3.30.70.870:FF:000002">
    <property type="entry name" value="Translation elongation factor 2"/>
    <property type="match status" value="1"/>
</dbReference>
<dbReference type="FunFam" id="3.40.50.300:FF:000058">
    <property type="entry name" value="Translation elongation factor 2"/>
    <property type="match status" value="1"/>
</dbReference>
<dbReference type="Gene3D" id="3.30.230.10">
    <property type="match status" value="1"/>
</dbReference>
<dbReference type="Gene3D" id="3.30.70.240">
    <property type="match status" value="1"/>
</dbReference>
<dbReference type="Gene3D" id="3.30.70.870">
    <property type="entry name" value="Elongation Factor G (Translational Gtpase), domain 3"/>
    <property type="match status" value="1"/>
</dbReference>
<dbReference type="Gene3D" id="3.40.50.300">
    <property type="entry name" value="P-loop containing nucleotide triphosphate hydrolases"/>
    <property type="match status" value="1"/>
</dbReference>
<dbReference type="Gene3D" id="2.40.30.10">
    <property type="entry name" value="Translation factors"/>
    <property type="match status" value="1"/>
</dbReference>
<dbReference type="InterPro" id="IPR041095">
    <property type="entry name" value="EFG_II"/>
</dbReference>
<dbReference type="InterPro" id="IPR035647">
    <property type="entry name" value="EFG_III/V"/>
</dbReference>
<dbReference type="InterPro" id="IPR000640">
    <property type="entry name" value="EFG_V-like"/>
</dbReference>
<dbReference type="InterPro" id="IPR004161">
    <property type="entry name" value="EFTu-like_2"/>
</dbReference>
<dbReference type="InterPro" id="IPR031157">
    <property type="entry name" value="G_TR_CS"/>
</dbReference>
<dbReference type="InterPro" id="IPR027417">
    <property type="entry name" value="P-loop_NTPase"/>
</dbReference>
<dbReference type="InterPro" id="IPR020568">
    <property type="entry name" value="Ribosomal_Su5_D2-typ_SF"/>
</dbReference>
<dbReference type="InterPro" id="IPR014721">
    <property type="entry name" value="Ribsml_uS5_D2-typ_fold_subgr"/>
</dbReference>
<dbReference type="InterPro" id="IPR005225">
    <property type="entry name" value="Small_GTP-bd"/>
</dbReference>
<dbReference type="InterPro" id="IPR000795">
    <property type="entry name" value="T_Tr_GTP-bd_dom"/>
</dbReference>
<dbReference type="InterPro" id="IPR009000">
    <property type="entry name" value="Transl_B-barrel_sf"/>
</dbReference>
<dbReference type="InterPro" id="IPR005517">
    <property type="entry name" value="Transl_elong_EFG/EF2_IV"/>
</dbReference>
<dbReference type="NCBIfam" id="TIGR00231">
    <property type="entry name" value="small_GTP"/>
    <property type="match status" value="1"/>
</dbReference>
<dbReference type="PANTHER" id="PTHR42908:SF35">
    <property type="entry name" value="ELONGATION FACTOR 2"/>
    <property type="match status" value="1"/>
</dbReference>
<dbReference type="PANTHER" id="PTHR42908">
    <property type="entry name" value="TRANSLATION ELONGATION FACTOR-RELATED"/>
    <property type="match status" value="1"/>
</dbReference>
<dbReference type="Pfam" id="PF00679">
    <property type="entry name" value="EFG_C"/>
    <property type="match status" value="1"/>
</dbReference>
<dbReference type="Pfam" id="PF14492">
    <property type="entry name" value="EFG_III"/>
    <property type="match status" value="1"/>
</dbReference>
<dbReference type="Pfam" id="PF03764">
    <property type="entry name" value="EFG_IV"/>
    <property type="match status" value="1"/>
</dbReference>
<dbReference type="Pfam" id="PF00009">
    <property type="entry name" value="GTP_EFTU"/>
    <property type="match status" value="1"/>
</dbReference>
<dbReference type="Pfam" id="PF03144">
    <property type="entry name" value="GTP_EFTU_D2"/>
    <property type="match status" value="1"/>
</dbReference>
<dbReference type="PRINTS" id="PR00315">
    <property type="entry name" value="ELONGATNFCT"/>
</dbReference>
<dbReference type="SMART" id="SM00838">
    <property type="entry name" value="EFG_C"/>
    <property type="match status" value="1"/>
</dbReference>
<dbReference type="SMART" id="SM00889">
    <property type="entry name" value="EFG_IV"/>
    <property type="match status" value="1"/>
</dbReference>
<dbReference type="SUPFAM" id="SSF54980">
    <property type="entry name" value="EF-G C-terminal domain-like"/>
    <property type="match status" value="2"/>
</dbReference>
<dbReference type="SUPFAM" id="SSF52540">
    <property type="entry name" value="P-loop containing nucleoside triphosphate hydrolases"/>
    <property type="match status" value="1"/>
</dbReference>
<dbReference type="SUPFAM" id="SSF54211">
    <property type="entry name" value="Ribosomal protein S5 domain 2-like"/>
    <property type="match status" value="1"/>
</dbReference>
<dbReference type="SUPFAM" id="SSF50447">
    <property type="entry name" value="Translation proteins"/>
    <property type="match status" value="1"/>
</dbReference>
<dbReference type="PROSITE" id="PS00301">
    <property type="entry name" value="G_TR_1"/>
    <property type="match status" value="1"/>
</dbReference>
<dbReference type="PROSITE" id="PS51722">
    <property type="entry name" value="G_TR_2"/>
    <property type="match status" value="1"/>
</dbReference>
<sequence length="858" mass="95427">MVNFTVDQIRSIMDKKANIRNMSVIAHVDHGKSTLTDSLVCKAGIIASARAGETRFTDTRKDEQERCITIKSTAISLFYELSENDLAFIKQSKDGCGFLINLIDSPGHVDFSSEVTAALRVTDGALVVVDCVSGVCVQTETVLRQAIAERIRPVLMMNKMDRALLELQLEPEALYQTFQRIVENVNVIISTYGEGESGPMGNIMIDPVLGTVGFGSGLHGWAFTLKQFAEMYVAKFAAKGEGQLAPSERCKKVEDMMKKLWGDRYFDPSNGKFSKSAVNADGKKLPRTFCQLILDPIFKVFDAIMNFKKEETAKLIEKLDIKLDSEDKDKEGKQLLKSVMRRWLPAGEALLQMITIHLPSPVTAQKYRCELLYEGPPDDEAAMGVKNCDPKGPLMMYISKMVPTTDKGRFYAFGRVFSGVVSTGLKVRIMGPNFTPGKKEDLYIKPIQRTILMMGRYVEPIEDVPCGNIVGLVGVDQYLVKTGTISTFEHAHNMRVMKFSVSPVVRVAVEAKNPADLPKLVEGLKRLAKSDPMVQCIIEESGEHIIAGAGELHLEICLKDLEEDHACIPIKKSDPVVSYRETVSEESSQMCLSKSPNKHNRLFMKARPFPDGLAEDIDKGDVSARQELKTRARYLAEKYEWDVTEARKIWCFGPDGSGPNILTDVTKGVQYLNEIKDSVVAGFQWATKEGVLCEENLRGVRFDVHDVTLHADAIHRGGGQIIPTARRVLYACVLTAQPRLMEPIYLVEIQCPEQVVGGIYGVLNRKRGHVFEESQVAGTPMFVVKAYLPVNESFGFTADLRSNTGGQAFPQCVFDHWQILPGDPFDNTTRPSQVVAETRKRKGLKEGVSALDNFLDKL</sequence>
<keyword id="KW-0002">3D-structure</keyword>
<keyword id="KW-0963">Cytoplasm</keyword>
<keyword id="KW-0251">Elongation factor</keyword>
<keyword id="KW-0342">GTP-binding</keyword>
<keyword id="KW-0378">Hydrolase</keyword>
<keyword id="KW-0547">Nucleotide-binding</keyword>
<keyword id="KW-0539">Nucleus</keyword>
<keyword id="KW-0648">Protein biosynthesis</keyword>
<keyword id="KW-1185">Reference proteome</keyword>
<accession>Q7ZXP8</accession>
<name>EF2_XENLA</name>
<proteinExistence type="evidence at protein level"/>